<protein>
    <recommendedName>
        <fullName>Arginine/agmatine antiporter</fullName>
    </recommendedName>
</protein>
<sequence>MISNGSKSGKNLGAIALAGMVISSMIGGGIFSLPQNMAASAGVGAIILAWILTGVGMFFIANTFKILSLVRPDLTTGIYMYSREGFGPYIGFTIGWGYWLCQIFGNVGYAVMTMDALNYFFPPYFQGGNTLPAILGGSILIWVFNFIVLKGIRQASFINIIGTVGKLVPLIVFIIITAFLFKLAIFKTDFWGDTVTKTQPLLGSMTSQLKSTMLVTLWAFIGIEGAVVMSARAKSPSAVGKATILGFTGCLTVYILLSILPFGSLFQHQLAGIANPSTAGVLDILVGKWGEILMNVGLLIAVLSSWLSWTMIVAEIPYSAAKNGTFPEIFAIENAHRSPKVSLYVTSALMQIAMLLVYFSTDAWNTMLSITGVMVLPAYFASAAFLVKFSKNKKYPNKGPIKAFTAKITGLLGAVYSIWLIYAGGLKYLLMAIILLALGIPFYIDAGKKGRNAKTFFAKKEVTEITIIAFLALLAIFLFSTEKIRL</sequence>
<reference key="1">
    <citation type="journal article" date="2005" name="Genome Res.">
        <title>The Chlamydophila abortus genome sequence reveals an array of variable proteins that contribute to interspecies variation.</title>
        <authorList>
            <person name="Thomson N.R."/>
            <person name="Yeats C."/>
            <person name="Bell K."/>
            <person name="Holden M.T.G."/>
            <person name="Bentley S.D."/>
            <person name="Livingstone M."/>
            <person name="Cerdeno-Tarraga A.-M."/>
            <person name="Harris B."/>
            <person name="Doggett J."/>
            <person name="Ormond D."/>
            <person name="Mungall K."/>
            <person name="Clarke K."/>
            <person name="Feltwell T."/>
            <person name="Hance Z."/>
            <person name="Sanders M."/>
            <person name="Quail M.A."/>
            <person name="Price C."/>
            <person name="Barrell B.G."/>
            <person name="Parkhill J."/>
            <person name="Longbottom D."/>
        </authorList>
    </citation>
    <scope>NUCLEOTIDE SEQUENCE [LARGE SCALE GENOMIC DNA]</scope>
    <source>
        <strain>DSM 27085 / S26/3</strain>
    </source>
</reference>
<feature type="chain" id="PRO_0000363173" description="Arginine/agmatine antiporter">
    <location>
        <begin position="1"/>
        <end position="486"/>
    </location>
</feature>
<feature type="transmembrane region" description="Helical" evidence="2">
    <location>
        <begin position="12"/>
        <end position="32"/>
    </location>
</feature>
<feature type="transmembrane region" description="Helical" evidence="2">
    <location>
        <begin position="41"/>
        <end position="61"/>
    </location>
</feature>
<feature type="transmembrane region" description="Helical" evidence="2">
    <location>
        <begin position="85"/>
        <end position="105"/>
    </location>
</feature>
<feature type="transmembrane region" description="Helical" evidence="2">
    <location>
        <begin position="132"/>
        <end position="152"/>
    </location>
</feature>
<feature type="transmembrane region" description="Helical" evidence="2">
    <location>
        <begin position="160"/>
        <end position="180"/>
    </location>
</feature>
<feature type="transmembrane region" description="Helical" evidence="2">
    <location>
        <begin position="211"/>
        <end position="231"/>
    </location>
</feature>
<feature type="transmembrane region" description="Helical" evidence="2">
    <location>
        <begin position="242"/>
        <end position="262"/>
    </location>
</feature>
<feature type="transmembrane region" description="Helical" evidence="2">
    <location>
        <begin position="296"/>
        <end position="316"/>
    </location>
</feature>
<feature type="transmembrane region" description="Helical" evidence="2">
    <location>
        <begin position="341"/>
        <end position="361"/>
    </location>
</feature>
<feature type="transmembrane region" description="Helical" evidence="2">
    <location>
        <begin position="367"/>
        <end position="387"/>
    </location>
</feature>
<feature type="transmembrane region" description="Helical" evidence="2">
    <location>
        <begin position="418"/>
        <end position="438"/>
    </location>
</feature>
<feature type="transmembrane region" description="Helical" evidence="2">
    <location>
        <begin position="461"/>
        <end position="481"/>
    </location>
</feature>
<dbReference type="EMBL" id="CR848038">
    <property type="protein sequence ID" value="CAH64145.1"/>
    <property type="molecule type" value="Genomic_DNA"/>
</dbReference>
<dbReference type="RefSeq" id="WP_011097273.1">
    <property type="nucleotide sequence ID" value="NC_004552.2"/>
</dbReference>
<dbReference type="SMR" id="Q5L5E6"/>
<dbReference type="KEGG" id="cab:CAB698"/>
<dbReference type="eggNOG" id="COG0531">
    <property type="taxonomic scope" value="Bacteria"/>
</dbReference>
<dbReference type="HOGENOM" id="CLU_007946_1_2_0"/>
<dbReference type="OrthoDB" id="178667at2"/>
<dbReference type="Proteomes" id="UP000001012">
    <property type="component" value="Chromosome"/>
</dbReference>
<dbReference type="GO" id="GO:0005886">
    <property type="term" value="C:plasma membrane"/>
    <property type="evidence" value="ECO:0007669"/>
    <property type="project" value="UniProtKB-SubCell"/>
</dbReference>
<dbReference type="GO" id="GO:0015297">
    <property type="term" value="F:antiporter activity"/>
    <property type="evidence" value="ECO:0007669"/>
    <property type="project" value="UniProtKB-KW"/>
</dbReference>
<dbReference type="GO" id="GO:0006865">
    <property type="term" value="P:amino acid transport"/>
    <property type="evidence" value="ECO:0007669"/>
    <property type="project" value="UniProtKB-KW"/>
</dbReference>
<dbReference type="Gene3D" id="1.20.1740.10">
    <property type="entry name" value="Amino acid/polyamine transporter I"/>
    <property type="match status" value="1"/>
</dbReference>
<dbReference type="InterPro" id="IPR002293">
    <property type="entry name" value="AA/rel_permease1"/>
</dbReference>
<dbReference type="InterPro" id="IPR004754">
    <property type="entry name" value="Amino_acid_antiprt"/>
</dbReference>
<dbReference type="InterPro" id="IPR050367">
    <property type="entry name" value="APC_superfamily"/>
</dbReference>
<dbReference type="NCBIfam" id="TIGR00905">
    <property type="entry name" value="2A0302"/>
    <property type="match status" value="1"/>
</dbReference>
<dbReference type="PANTHER" id="PTHR42770">
    <property type="entry name" value="AMINO ACID TRANSPORTER-RELATED"/>
    <property type="match status" value="1"/>
</dbReference>
<dbReference type="PANTHER" id="PTHR42770:SF4">
    <property type="entry name" value="ARGININE_ORNITHINE ANTIPORTER-RELATED"/>
    <property type="match status" value="1"/>
</dbReference>
<dbReference type="Pfam" id="PF13520">
    <property type="entry name" value="AA_permease_2"/>
    <property type="match status" value="1"/>
</dbReference>
<dbReference type="PIRSF" id="PIRSF006060">
    <property type="entry name" value="AA_transporter"/>
    <property type="match status" value="1"/>
</dbReference>
<accession>Q5L5E6</accession>
<evidence type="ECO:0000250" key="1"/>
<evidence type="ECO:0000255" key="2"/>
<evidence type="ECO:0000305" key="3"/>
<gene>
    <name type="primary">aaxC</name>
    <name type="synonym">arcD</name>
    <name type="ordered locus">CAB698</name>
</gene>
<name>AAXC_CHLAB</name>
<proteinExistence type="inferred from homology"/>
<comment type="function">
    <text evidence="1">Catalyzes the exchange of L-arginine for agmatine. The arginine uptake by the bacterium in the macrophage may be a virulence factor against the host innate immune response (By similarity).</text>
</comment>
<comment type="subcellular location">
    <subcellularLocation>
        <location evidence="1">Cell inner membrane</location>
        <topology evidence="1">Multi-pass membrane protein</topology>
    </subcellularLocation>
</comment>
<comment type="similarity">
    <text evidence="3">Belongs to the amino acid-polyamine-organocation (APC) superfamily. Basic amino acid/polyamine antiporter (APA) (TC 2.A.3.2) family.</text>
</comment>
<organism>
    <name type="scientific">Chlamydia abortus (strain DSM 27085 / S26/3)</name>
    <name type="common">Chlamydophila abortus</name>
    <dbReference type="NCBI Taxonomy" id="218497"/>
    <lineage>
        <taxon>Bacteria</taxon>
        <taxon>Pseudomonadati</taxon>
        <taxon>Chlamydiota</taxon>
        <taxon>Chlamydiia</taxon>
        <taxon>Chlamydiales</taxon>
        <taxon>Chlamydiaceae</taxon>
        <taxon>Chlamydia/Chlamydophila group</taxon>
        <taxon>Chlamydia</taxon>
    </lineage>
</organism>
<keyword id="KW-0029">Amino-acid transport</keyword>
<keyword id="KW-0050">Antiport</keyword>
<keyword id="KW-0997">Cell inner membrane</keyword>
<keyword id="KW-1003">Cell membrane</keyword>
<keyword id="KW-0472">Membrane</keyword>
<keyword id="KW-0812">Transmembrane</keyword>
<keyword id="KW-1133">Transmembrane helix</keyword>
<keyword id="KW-0813">Transport</keyword>
<keyword id="KW-0843">Virulence</keyword>